<reference key="1">
    <citation type="journal article" date="2006" name="Nat. Genet.">
        <title>The multidrug-resistant human pathogen Clostridium difficile has a highly mobile, mosaic genome.</title>
        <authorList>
            <person name="Sebaihia M."/>
            <person name="Wren B.W."/>
            <person name="Mullany P."/>
            <person name="Fairweather N.F."/>
            <person name="Minton N."/>
            <person name="Stabler R."/>
            <person name="Thomson N.R."/>
            <person name="Roberts A.P."/>
            <person name="Cerdeno-Tarraga A.M."/>
            <person name="Wang H."/>
            <person name="Holden M.T.G."/>
            <person name="Wright A."/>
            <person name="Churcher C."/>
            <person name="Quail M.A."/>
            <person name="Baker S."/>
            <person name="Bason N."/>
            <person name="Brooks K."/>
            <person name="Chillingworth T."/>
            <person name="Cronin A."/>
            <person name="Davis P."/>
            <person name="Dowd L."/>
            <person name="Fraser A."/>
            <person name="Feltwell T."/>
            <person name="Hance Z."/>
            <person name="Holroyd S."/>
            <person name="Jagels K."/>
            <person name="Moule S."/>
            <person name="Mungall K."/>
            <person name="Price C."/>
            <person name="Rabbinowitsch E."/>
            <person name="Sharp S."/>
            <person name="Simmonds M."/>
            <person name="Stevens K."/>
            <person name="Unwin L."/>
            <person name="Whithead S."/>
            <person name="Dupuy B."/>
            <person name="Dougan G."/>
            <person name="Barrell B."/>
            <person name="Parkhill J."/>
        </authorList>
    </citation>
    <scope>NUCLEOTIDE SEQUENCE [LARGE SCALE GENOMIC DNA]</scope>
    <source>
        <strain>630</strain>
    </source>
</reference>
<name>UNG_CLOD6</name>
<proteinExistence type="inferred from homology"/>
<feature type="chain" id="PRO_1000009880" description="Uracil-DNA glycosylase">
    <location>
        <begin position="1"/>
        <end position="224"/>
    </location>
</feature>
<feature type="active site" description="Proton acceptor" evidence="1">
    <location>
        <position position="64"/>
    </location>
</feature>
<accession>Q182G9</accession>
<comment type="function">
    <text evidence="1">Excises uracil residues from the DNA which can arise as a result of misincorporation of dUMP residues by DNA polymerase or due to deamination of cytosine.</text>
</comment>
<comment type="catalytic activity">
    <reaction evidence="1">
        <text>Hydrolyzes single-stranded DNA or mismatched double-stranded DNA and polynucleotides, releasing free uracil.</text>
        <dbReference type="EC" id="3.2.2.27"/>
    </reaction>
</comment>
<comment type="subcellular location">
    <subcellularLocation>
        <location evidence="1">Cytoplasm</location>
    </subcellularLocation>
</comment>
<comment type="similarity">
    <text evidence="1">Belongs to the uracil-DNA glycosylase (UDG) superfamily. UNG family.</text>
</comment>
<keyword id="KW-0963">Cytoplasm</keyword>
<keyword id="KW-0227">DNA damage</keyword>
<keyword id="KW-0234">DNA repair</keyword>
<keyword id="KW-0378">Hydrolase</keyword>
<keyword id="KW-1185">Reference proteome</keyword>
<gene>
    <name evidence="1" type="primary">ung</name>
    <name type="ordered locus">CD630_24810</name>
</gene>
<evidence type="ECO:0000255" key="1">
    <source>
        <dbReference type="HAMAP-Rule" id="MF_00148"/>
    </source>
</evidence>
<organism>
    <name type="scientific">Clostridioides difficile (strain 630)</name>
    <name type="common">Peptoclostridium difficile</name>
    <dbReference type="NCBI Taxonomy" id="272563"/>
    <lineage>
        <taxon>Bacteria</taxon>
        <taxon>Bacillati</taxon>
        <taxon>Bacillota</taxon>
        <taxon>Clostridia</taxon>
        <taxon>Peptostreptococcales</taxon>
        <taxon>Peptostreptococcaceae</taxon>
        <taxon>Clostridioides</taxon>
    </lineage>
</organism>
<sequence length="224" mass="25941">MVNLGNDWDELLKEEFEKDYYLNLRKFLIEEYKTRQIFPNMHNIYEALKHTSYKDTKVLILGQDPYHGDNQAHGLAFSVQPQVKTPPSLLNMYKELKDDLGCFIPNNGYLMPWADQGVLLLNTALTVRAHEANSHKNKGWEIFTDRVISILSEREDPVIFVLWGSNARKKVELIDTSKHYILEAPHPSPLSASKGFFGCKHFSKINEILKKLGKEPINWQIENI</sequence>
<protein>
    <recommendedName>
        <fullName evidence="1">Uracil-DNA glycosylase</fullName>
        <shortName evidence="1">UDG</shortName>
        <ecNumber evidence="1">3.2.2.27</ecNumber>
    </recommendedName>
</protein>
<dbReference type="EC" id="3.2.2.27" evidence="1"/>
<dbReference type="EMBL" id="AM180355">
    <property type="protein sequence ID" value="CAJ69368.1"/>
    <property type="molecule type" value="Genomic_DNA"/>
</dbReference>
<dbReference type="RefSeq" id="WP_003416528.1">
    <property type="nucleotide sequence ID" value="NZ_JAUPES010000003.1"/>
</dbReference>
<dbReference type="RefSeq" id="YP_001088995.1">
    <property type="nucleotide sequence ID" value="NC_009089.1"/>
</dbReference>
<dbReference type="SMR" id="Q182G9"/>
<dbReference type="STRING" id="272563.CD630_24810"/>
<dbReference type="EnsemblBacteria" id="CAJ69368">
    <property type="protein sequence ID" value="CAJ69368"/>
    <property type="gene ID" value="CD630_24810"/>
</dbReference>
<dbReference type="KEGG" id="cdf:CD630_24810"/>
<dbReference type="KEGG" id="pdc:CDIF630_02728"/>
<dbReference type="PATRIC" id="fig|272563.120.peg.2620"/>
<dbReference type="eggNOG" id="COG0692">
    <property type="taxonomic scope" value="Bacteria"/>
</dbReference>
<dbReference type="OrthoDB" id="9804372at2"/>
<dbReference type="PhylomeDB" id="Q182G9"/>
<dbReference type="BioCyc" id="PDIF272563:G12WB-2636-MONOMER"/>
<dbReference type="Proteomes" id="UP000001978">
    <property type="component" value="Chromosome"/>
</dbReference>
<dbReference type="GO" id="GO:0005737">
    <property type="term" value="C:cytoplasm"/>
    <property type="evidence" value="ECO:0007669"/>
    <property type="project" value="UniProtKB-SubCell"/>
</dbReference>
<dbReference type="GO" id="GO:0004844">
    <property type="term" value="F:uracil DNA N-glycosylase activity"/>
    <property type="evidence" value="ECO:0007669"/>
    <property type="project" value="UniProtKB-UniRule"/>
</dbReference>
<dbReference type="GO" id="GO:0097510">
    <property type="term" value="P:base-excision repair, AP site formation via deaminated base removal"/>
    <property type="evidence" value="ECO:0007669"/>
    <property type="project" value="TreeGrafter"/>
</dbReference>
<dbReference type="CDD" id="cd10027">
    <property type="entry name" value="UDG-F1-like"/>
    <property type="match status" value="1"/>
</dbReference>
<dbReference type="FunFam" id="3.40.470.10:FF:000001">
    <property type="entry name" value="Uracil-DNA glycosylase"/>
    <property type="match status" value="1"/>
</dbReference>
<dbReference type="Gene3D" id="3.40.470.10">
    <property type="entry name" value="Uracil-DNA glycosylase-like domain"/>
    <property type="match status" value="1"/>
</dbReference>
<dbReference type="HAMAP" id="MF_00148">
    <property type="entry name" value="UDG"/>
    <property type="match status" value="1"/>
</dbReference>
<dbReference type="InterPro" id="IPR002043">
    <property type="entry name" value="UDG_fam1"/>
</dbReference>
<dbReference type="InterPro" id="IPR018085">
    <property type="entry name" value="Ura-DNA_Glyclase_AS"/>
</dbReference>
<dbReference type="InterPro" id="IPR005122">
    <property type="entry name" value="Uracil-DNA_glycosylase-like"/>
</dbReference>
<dbReference type="InterPro" id="IPR036895">
    <property type="entry name" value="Uracil-DNA_glycosylase-like_sf"/>
</dbReference>
<dbReference type="NCBIfam" id="NF003588">
    <property type="entry name" value="PRK05254.1-1"/>
    <property type="match status" value="1"/>
</dbReference>
<dbReference type="NCBIfam" id="NF003589">
    <property type="entry name" value="PRK05254.1-2"/>
    <property type="match status" value="1"/>
</dbReference>
<dbReference type="NCBIfam" id="NF003591">
    <property type="entry name" value="PRK05254.1-4"/>
    <property type="match status" value="1"/>
</dbReference>
<dbReference type="NCBIfam" id="NF003592">
    <property type="entry name" value="PRK05254.1-5"/>
    <property type="match status" value="1"/>
</dbReference>
<dbReference type="NCBIfam" id="TIGR00628">
    <property type="entry name" value="ung"/>
    <property type="match status" value="1"/>
</dbReference>
<dbReference type="PANTHER" id="PTHR11264">
    <property type="entry name" value="URACIL-DNA GLYCOSYLASE"/>
    <property type="match status" value="1"/>
</dbReference>
<dbReference type="PANTHER" id="PTHR11264:SF0">
    <property type="entry name" value="URACIL-DNA GLYCOSYLASE"/>
    <property type="match status" value="1"/>
</dbReference>
<dbReference type="Pfam" id="PF03167">
    <property type="entry name" value="UDG"/>
    <property type="match status" value="1"/>
</dbReference>
<dbReference type="SMART" id="SM00986">
    <property type="entry name" value="UDG"/>
    <property type="match status" value="1"/>
</dbReference>
<dbReference type="SMART" id="SM00987">
    <property type="entry name" value="UreE_C"/>
    <property type="match status" value="1"/>
</dbReference>
<dbReference type="SUPFAM" id="SSF52141">
    <property type="entry name" value="Uracil-DNA glycosylase-like"/>
    <property type="match status" value="1"/>
</dbReference>
<dbReference type="PROSITE" id="PS00130">
    <property type="entry name" value="U_DNA_GLYCOSYLASE"/>
    <property type="match status" value="1"/>
</dbReference>